<dbReference type="EC" id="7.1.1.-" evidence="1"/>
<dbReference type="EMBL" id="AM039952">
    <property type="protein sequence ID" value="CAJ24519.1"/>
    <property type="molecule type" value="Genomic_DNA"/>
</dbReference>
<dbReference type="SMR" id="Q3BRP2"/>
<dbReference type="STRING" id="456327.BJD11_08670"/>
<dbReference type="KEGG" id="xcv:XCV2840"/>
<dbReference type="eggNOG" id="COG1007">
    <property type="taxonomic scope" value="Bacteria"/>
</dbReference>
<dbReference type="HOGENOM" id="CLU_007100_1_3_6"/>
<dbReference type="Proteomes" id="UP000007069">
    <property type="component" value="Chromosome"/>
</dbReference>
<dbReference type="GO" id="GO:0005886">
    <property type="term" value="C:plasma membrane"/>
    <property type="evidence" value="ECO:0007669"/>
    <property type="project" value="UniProtKB-SubCell"/>
</dbReference>
<dbReference type="GO" id="GO:0008137">
    <property type="term" value="F:NADH dehydrogenase (ubiquinone) activity"/>
    <property type="evidence" value="ECO:0007669"/>
    <property type="project" value="InterPro"/>
</dbReference>
<dbReference type="GO" id="GO:0050136">
    <property type="term" value="F:NADH:ubiquinone reductase (non-electrogenic) activity"/>
    <property type="evidence" value="ECO:0007669"/>
    <property type="project" value="UniProtKB-UniRule"/>
</dbReference>
<dbReference type="GO" id="GO:0048038">
    <property type="term" value="F:quinone binding"/>
    <property type="evidence" value="ECO:0007669"/>
    <property type="project" value="UniProtKB-KW"/>
</dbReference>
<dbReference type="GO" id="GO:0042773">
    <property type="term" value="P:ATP synthesis coupled electron transport"/>
    <property type="evidence" value="ECO:0007669"/>
    <property type="project" value="InterPro"/>
</dbReference>
<dbReference type="HAMAP" id="MF_00445">
    <property type="entry name" value="NDH1_NuoN_1"/>
    <property type="match status" value="1"/>
</dbReference>
<dbReference type="InterPro" id="IPR010096">
    <property type="entry name" value="NADH-Q_OxRdtase_suN/2"/>
</dbReference>
<dbReference type="InterPro" id="IPR001750">
    <property type="entry name" value="ND/Mrp_TM"/>
</dbReference>
<dbReference type="NCBIfam" id="TIGR01770">
    <property type="entry name" value="NDH_I_N"/>
    <property type="match status" value="1"/>
</dbReference>
<dbReference type="NCBIfam" id="NF004442">
    <property type="entry name" value="PRK05777.1-5"/>
    <property type="match status" value="1"/>
</dbReference>
<dbReference type="PANTHER" id="PTHR22773">
    <property type="entry name" value="NADH DEHYDROGENASE"/>
    <property type="match status" value="1"/>
</dbReference>
<dbReference type="Pfam" id="PF00361">
    <property type="entry name" value="Proton_antipo_M"/>
    <property type="match status" value="1"/>
</dbReference>
<dbReference type="PRINTS" id="PR01434">
    <property type="entry name" value="NADHDHGNASE5"/>
</dbReference>
<keyword id="KW-0997">Cell inner membrane</keyword>
<keyword id="KW-1003">Cell membrane</keyword>
<keyword id="KW-0472">Membrane</keyword>
<keyword id="KW-0520">NAD</keyword>
<keyword id="KW-0874">Quinone</keyword>
<keyword id="KW-1278">Translocase</keyword>
<keyword id="KW-0812">Transmembrane</keyword>
<keyword id="KW-1133">Transmembrane helix</keyword>
<keyword id="KW-0813">Transport</keyword>
<keyword id="KW-0830">Ubiquinone</keyword>
<name>NUON_XANE5</name>
<proteinExistence type="inferred from homology"/>
<sequence>MMTTPTLAPLTTADLAPLVPELVLIGGAFALLMLDLFVSQRNKVWTHLFSVAVLAVVLVLLATGTGGQGDIFNGMFVRDTAADVMKTVIVLVSGLSLVYGWTYLRERNLYQGEIPVLVLFATAGMMLLASAGSLLMVYLGLELLALCSYALVASNRDNGLATEAAMKYFVLGSLASGLLLYGMSLVYGATGTLSLAGIHDAIEGSNERTLLLTGTIFMIAGVAFKLGAAPFHMWLPDVYQGAPAPIALFISSAPKLAAFGMAYRLLEVGMGPLSPQWHLLIGGLSAVSLVVGNLMAIAQSNLKRMLAYSTVSHIGFLLMGVAGGGEEGYAAAMFYAVSYTIMSTASFGAIIALSRNGFEAENIDDFKGLNARNPWMAGLVLCIMASLAGIPPFLGFWTKLAVLGAAVKGDMLWLALVGVICAVIGAYYYLRVIKVMYFDEPVGEPLPANNDRVLGTVLGVNALALLALGLAWSPIMVWCQRAFAGLA</sequence>
<gene>
    <name evidence="1" type="primary">nuoN</name>
    <name type="ordered locus">XCV2840</name>
</gene>
<protein>
    <recommendedName>
        <fullName evidence="1">NADH-quinone oxidoreductase subunit N</fullName>
        <ecNumber evidence="1">7.1.1.-</ecNumber>
    </recommendedName>
    <alternativeName>
        <fullName evidence="1">NADH dehydrogenase I subunit N</fullName>
    </alternativeName>
    <alternativeName>
        <fullName evidence="1">NDH-1 subunit N</fullName>
    </alternativeName>
</protein>
<reference key="1">
    <citation type="journal article" date="2005" name="J. Bacteriol.">
        <title>Insights into genome plasticity and pathogenicity of the plant pathogenic Bacterium Xanthomonas campestris pv. vesicatoria revealed by the complete genome sequence.</title>
        <authorList>
            <person name="Thieme F."/>
            <person name="Koebnik R."/>
            <person name="Bekel T."/>
            <person name="Berger C."/>
            <person name="Boch J."/>
            <person name="Buettner D."/>
            <person name="Caldana C."/>
            <person name="Gaigalat L."/>
            <person name="Goesmann A."/>
            <person name="Kay S."/>
            <person name="Kirchner O."/>
            <person name="Lanz C."/>
            <person name="Linke B."/>
            <person name="McHardy A.C."/>
            <person name="Meyer F."/>
            <person name="Mittenhuber G."/>
            <person name="Nies D.H."/>
            <person name="Niesbach-Kloesgen U."/>
            <person name="Patschkowski T."/>
            <person name="Rueckert C."/>
            <person name="Rupp O."/>
            <person name="Schneiker S."/>
            <person name="Schuster S.C."/>
            <person name="Vorhoelter F.J."/>
            <person name="Weber E."/>
            <person name="Puehler A."/>
            <person name="Bonas U."/>
            <person name="Bartels D."/>
            <person name="Kaiser O."/>
        </authorList>
    </citation>
    <scope>NUCLEOTIDE SEQUENCE [LARGE SCALE GENOMIC DNA]</scope>
    <source>
        <strain>85-10</strain>
    </source>
</reference>
<feature type="chain" id="PRO_0000391247" description="NADH-quinone oxidoreductase subunit N">
    <location>
        <begin position="1"/>
        <end position="487"/>
    </location>
</feature>
<feature type="transmembrane region" description="Helical" evidence="1">
    <location>
        <begin position="18"/>
        <end position="38"/>
    </location>
</feature>
<feature type="transmembrane region" description="Helical" evidence="1">
    <location>
        <begin position="44"/>
        <end position="64"/>
    </location>
</feature>
<feature type="transmembrane region" description="Helical" evidence="1">
    <location>
        <begin position="84"/>
        <end position="104"/>
    </location>
</feature>
<feature type="transmembrane region" description="Helical" evidence="1">
    <location>
        <begin position="116"/>
        <end position="136"/>
    </location>
</feature>
<feature type="transmembrane region" description="Helical" evidence="1">
    <location>
        <begin position="169"/>
        <end position="189"/>
    </location>
</feature>
<feature type="transmembrane region" description="Helical" evidence="1">
    <location>
        <begin position="211"/>
        <end position="231"/>
    </location>
</feature>
<feature type="transmembrane region" description="Helical" evidence="1">
    <location>
        <begin position="242"/>
        <end position="262"/>
    </location>
</feature>
<feature type="transmembrane region" description="Helical" evidence="1">
    <location>
        <begin position="277"/>
        <end position="297"/>
    </location>
</feature>
<feature type="transmembrane region" description="Helical" evidence="1">
    <location>
        <begin position="305"/>
        <end position="325"/>
    </location>
</feature>
<feature type="transmembrane region" description="Helical" evidence="1">
    <location>
        <begin position="333"/>
        <end position="353"/>
    </location>
</feature>
<feature type="transmembrane region" description="Helical" evidence="1">
    <location>
        <begin position="377"/>
        <end position="397"/>
    </location>
</feature>
<feature type="transmembrane region" description="Helical" evidence="1">
    <location>
        <begin position="410"/>
        <end position="430"/>
    </location>
</feature>
<feature type="transmembrane region" description="Helical" evidence="1">
    <location>
        <begin position="457"/>
        <end position="477"/>
    </location>
</feature>
<accession>Q3BRP2</accession>
<comment type="function">
    <text evidence="1">NDH-1 shuttles electrons from NADH, via FMN and iron-sulfur (Fe-S) centers, to quinones in the respiratory chain. The immediate electron acceptor for the enzyme in this species is believed to be ubiquinone. Couples the redox reaction to proton translocation (for every two electrons transferred, four hydrogen ions are translocated across the cytoplasmic membrane), and thus conserves the redox energy in a proton gradient.</text>
</comment>
<comment type="catalytic activity">
    <reaction evidence="1">
        <text>a quinone + NADH + 5 H(+)(in) = a quinol + NAD(+) + 4 H(+)(out)</text>
        <dbReference type="Rhea" id="RHEA:57888"/>
        <dbReference type="ChEBI" id="CHEBI:15378"/>
        <dbReference type="ChEBI" id="CHEBI:24646"/>
        <dbReference type="ChEBI" id="CHEBI:57540"/>
        <dbReference type="ChEBI" id="CHEBI:57945"/>
        <dbReference type="ChEBI" id="CHEBI:132124"/>
    </reaction>
</comment>
<comment type="subunit">
    <text evidence="1">NDH-1 is composed of 14 different subunits. Subunits NuoA, H, J, K, L, M, N constitute the membrane sector of the complex.</text>
</comment>
<comment type="subcellular location">
    <subcellularLocation>
        <location evidence="1">Cell inner membrane</location>
        <topology evidence="1">Multi-pass membrane protein</topology>
    </subcellularLocation>
</comment>
<comment type="similarity">
    <text evidence="1">Belongs to the complex I subunit 2 family.</text>
</comment>
<organism>
    <name type="scientific">Xanthomonas euvesicatoria pv. vesicatoria (strain 85-10)</name>
    <name type="common">Xanthomonas campestris pv. vesicatoria</name>
    <dbReference type="NCBI Taxonomy" id="316273"/>
    <lineage>
        <taxon>Bacteria</taxon>
        <taxon>Pseudomonadati</taxon>
        <taxon>Pseudomonadota</taxon>
        <taxon>Gammaproteobacteria</taxon>
        <taxon>Lysobacterales</taxon>
        <taxon>Lysobacteraceae</taxon>
        <taxon>Xanthomonas</taxon>
    </lineage>
</organism>
<evidence type="ECO:0000255" key="1">
    <source>
        <dbReference type="HAMAP-Rule" id="MF_00445"/>
    </source>
</evidence>